<keyword id="KW-0067">ATP-binding</keyword>
<keyword id="KW-0963">Cytoplasm</keyword>
<keyword id="KW-0418">Kinase</keyword>
<keyword id="KW-0460">Magnesium</keyword>
<keyword id="KW-0479">Metal-binding</keyword>
<keyword id="KW-0546">Nucleotide metabolism</keyword>
<keyword id="KW-0547">Nucleotide-binding</keyword>
<keyword id="KW-0597">Phosphoprotein</keyword>
<keyword id="KW-1185">Reference proteome</keyword>
<keyword id="KW-0808">Transferase</keyword>
<protein>
    <recommendedName>
        <fullName evidence="1">Nucleoside diphosphate kinase</fullName>
        <shortName evidence="1">NDK</shortName>
        <shortName evidence="1">NDP kinase</shortName>
        <ecNumber evidence="1">2.7.4.6</ecNumber>
    </recommendedName>
    <alternativeName>
        <fullName evidence="1">Nucleoside-2-P kinase</fullName>
    </alternativeName>
</protein>
<proteinExistence type="inferred from homology"/>
<feature type="chain" id="PRO_1000135259" description="Nucleoside diphosphate kinase">
    <location>
        <begin position="1"/>
        <end position="141"/>
    </location>
</feature>
<feature type="active site" description="Pros-phosphohistidine intermediate" evidence="1">
    <location>
        <position position="117"/>
    </location>
</feature>
<feature type="binding site" evidence="1">
    <location>
        <position position="11"/>
    </location>
    <ligand>
        <name>ATP</name>
        <dbReference type="ChEBI" id="CHEBI:30616"/>
    </ligand>
</feature>
<feature type="binding site" evidence="1">
    <location>
        <position position="59"/>
    </location>
    <ligand>
        <name>ATP</name>
        <dbReference type="ChEBI" id="CHEBI:30616"/>
    </ligand>
</feature>
<feature type="binding site" evidence="1">
    <location>
        <position position="87"/>
    </location>
    <ligand>
        <name>ATP</name>
        <dbReference type="ChEBI" id="CHEBI:30616"/>
    </ligand>
</feature>
<feature type="binding site" evidence="1">
    <location>
        <position position="93"/>
    </location>
    <ligand>
        <name>ATP</name>
        <dbReference type="ChEBI" id="CHEBI:30616"/>
    </ligand>
</feature>
<feature type="binding site" evidence="1">
    <location>
        <position position="104"/>
    </location>
    <ligand>
        <name>ATP</name>
        <dbReference type="ChEBI" id="CHEBI:30616"/>
    </ligand>
</feature>
<feature type="binding site" evidence="1">
    <location>
        <position position="114"/>
    </location>
    <ligand>
        <name>ATP</name>
        <dbReference type="ChEBI" id="CHEBI:30616"/>
    </ligand>
</feature>
<dbReference type="EC" id="2.7.4.6" evidence="1"/>
<dbReference type="EMBL" id="CP001154">
    <property type="protein sequence ID" value="ACO73675.1"/>
    <property type="molecule type" value="Genomic_DNA"/>
</dbReference>
<dbReference type="RefSeq" id="WP_012696167.1">
    <property type="nucleotide sequence ID" value="NC_012559.1"/>
</dbReference>
<dbReference type="SMR" id="C1DD40"/>
<dbReference type="STRING" id="557598.LHK_00682"/>
<dbReference type="GeneID" id="75109010"/>
<dbReference type="KEGG" id="lhk:LHK_00682"/>
<dbReference type="eggNOG" id="COG0105">
    <property type="taxonomic scope" value="Bacteria"/>
</dbReference>
<dbReference type="HOGENOM" id="CLU_060216_8_1_4"/>
<dbReference type="Proteomes" id="UP000002010">
    <property type="component" value="Chromosome"/>
</dbReference>
<dbReference type="GO" id="GO:0005737">
    <property type="term" value="C:cytoplasm"/>
    <property type="evidence" value="ECO:0007669"/>
    <property type="project" value="UniProtKB-SubCell"/>
</dbReference>
<dbReference type="GO" id="GO:0005524">
    <property type="term" value="F:ATP binding"/>
    <property type="evidence" value="ECO:0007669"/>
    <property type="project" value="UniProtKB-UniRule"/>
</dbReference>
<dbReference type="GO" id="GO:0046872">
    <property type="term" value="F:metal ion binding"/>
    <property type="evidence" value="ECO:0007669"/>
    <property type="project" value="UniProtKB-KW"/>
</dbReference>
<dbReference type="GO" id="GO:0004550">
    <property type="term" value="F:nucleoside diphosphate kinase activity"/>
    <property type="evidence" value="ECO:0007669"/>
    <property type="project" value="UniProtKB-UniRule"/>
</dbReference>
<dbReference type="GO" id="GO:0006241">
    <property type="term" value="P:CTP biosynthetic process"/>
    <property type="evidence" value="ECO:0007669"/>
    <property type="project" value="UniProtKB-UniRule"/>
</dbReference>
<dbReference type="GO" id="GO:0006183">
    <property type="term" value="P:GTP biosynthetic process"/>
    <property type="evidence" value="ECO:0007669"/>
    <property type="project" value="UniProtKB-UniRule"/>
</dbReference>
<dbReference type="GO" id="GO:0006228">
    <property type="term" value="P:UTP biosynthetic process"/>
    <property type="evidence" value="ECO:0007669"/>
    <property type="project" value="UniProtKB-UniRule"/>
</dbReference>
<dbReference type="CDD" id="cd04413">
    <property type="entry name" value="NDPk_I"/>
    <property type="match status" value="1"/>
</dbReference>
<dbReference type="FunFam" id="3.30.70.141:FF:000001">
    <property type="entry name" value="Nucleoside diphosphate kinase"/>
    <property type="match status" value="1"/>
</dbReference>
<dbReference type="Gene3D" id="3.30.70.141">
    <property type="entry name" value="Nucleoside diphosphate kinase-like domain"/>
    <property type="match status" value="1"/>
</dbReference>
<dbReference type="HAMAP" id="MF_00451">
    <property type="entry name" value="NDP_kinase"/>
    <property type="match status" value="1"/>
</dbReference>
<dbReference type="InterPro" id="IPR034907">
    <property type="entry name" value="NDK-like_dom"/>
</dbReference>
<dbReference type="InterPro" id="IPR036850">
    <property type="entry name" value="NDK-like_dom_sf"/>
</dbReference>
<dbReference type="InterPro" id="IPR001564">
    <property type="entry name" value="Nucleoside_diP_kinase"/>
</dbReference>
<dbReference type="InterPro" id="IPR023005">
    <property type="entry name" value="Nucleoside_diP_kinase_AS"/>
</dbReference>
<dbReference type="NCBIfam" id="NF001908">
    <property type="entry name" value="PRK00668.1"/>
    <property type="match status" value="1"/>
</dbReference>
<dbReference type="PANTHER" id="PTHR11349">
    <property type="entry name" value="NUCLEOSIDE DIPHOSPHATE KINASE"/>
    <property type="match status" value="1"/>
</dbReference>
<dbReference type="Pfam" id="PF00334">
    <property type="entry name" value="NDK"/>
    <property type="match status" value="1"/>
</dbReference>
<dbReference type="PRINTS" id="PR01243">
    <property type="entry name" value="NUCDPKINASE"/>
</dbReference>
<dbReference type="SMART" id="SM00562">
    <property type="entry name" value="NDK"/>
    <property type="match status" value="1"/>
</dbReference>
<dbReference type="SUPFAM" id="SSF54919">
    <property type="entry name" value="Nucleoside diphosphate kinase, NDK"/>
    <property type="match status" value="1"/>
</dbReference>
<dbReference type="PROSITE" id="PS00469">
    <property type="entry name" value="NDPK"/>
    <property type="match status" value="1"/>
</dbReference>
<dbReference type="PROSITE" id="PS51374">
    <property type="entry name" value="NDPK_LIKE"/>
    <property type="match status" value="1"/>
</dbReference>
<comment type="function">
    <text evidence="1">Major role in the synthesis of nucleoside triphosphates other than ATP. The ATP gamma phosphate is transferred to the NDP beta phosphate via a ping-pong mechanism, using a phosphorylated active-site intermediate.</text>
</comment>
<comment type="catalytic activity">
    <reaction evidence="1">
        <text>a 2'-deoxyribonucleoside 5'-diphosphate + ATP = a 2'-deoxyribonucleoside 5'-triphosphate + ADP</text>
        <dbReference type="Rhea" id="RHEA:44640"/>
        <dbReference type="ChEBI" id="CHEBI:30616"/>
        <dbReference type="ChEBI" id="CHEBI:61560"/>
        <dbReference type="ChEBI" id="CHEBI:73316"/>
        <dbReference type="ChEBI" id="CHEBI:456216"/>
        <dbReference type="EC" id="2.7.4.6"/>
    </reaction>
</comment>
<comment type="catalytic activity">
    <reaction evidence="1">
        <text>a ribonucleoside 5'-diphosphate + ATP = a ribonucleoside 5'-triphosphate + ADP</text>
        <dbReference type="Rhea" id="RHEA:18113"/>
        <dbReference type="ChEBI" id="CHEBI:30616"/>
        <dbReference type="ChEBI" id="CHEBI:57930"/>
        <dbReference type="ChEBI" id="CHEBI:61557"/>
        <dbReference type="ChEBI" id="CHEBI:456216"/>
        <dbReference type="EC" id="2.7.4.6"/>
    </reaction>
</comment>
<comment type="cofactor">
    <cofactor evidence="1">
        <name>Mg(2+)</name>
        <dbReference type="ChEBI" id="CHEBI:18420"/>
    </cofactor>
</comment>
<comment type="subunit">
    <text evidence="1">Homotetramer.</text>
</comment>
<comment type="subcellular location">
    <subcellularLocation>
        <location evidence="1">Cytoplasm</location>
    </subcellularLocation>
</comment>
<comment type="similarity">
    <text evidence="1">Belongs to the NDK family.</text>
</comment>
<gene>
    <name evidence="1" type="primary">ndk</name>
    <name type="ordered locus">LHK_00682</name>
</gene>
<sequence length="141" mass="15533">MAIERTLSIVKPDAVAKNVIGKIYDRFESNGLKIVAAKMKHLSRREAEGFYAVHKERPFFNDLVEFMISGPVMVQVLEGENAVLKNRELMGATDPKKADAGTIRADFAESIDANAVHGSDSLENAAIEIAYFFSATEVCPR</sequence>
<evidence type="ECO:0000255" key="1">
    <source>
        <dbReference type="HAMAP-Rule" id="MF_00451"/>
    </source>
</evidence>
<reference key="1">
    <citation type="journal article" date="2009" name="PLoS Genet.">
        <title>The complete genome and proteome of Laribacter hongkongensis reveal potential mechanisms for adaptations to different temperatures and habitats.</title>
        <authorList>
            <person name="Woo P.C.Y."/>
            <person name="Lau S.K.P."/>
            <person name="Tse H."/>
            <person name="Teng J.L.L."/>
            <person name="Curreem S.O."/>
            <person name="Tsang A.K.L."/>
            <person name="Fan R.Y.Y."/>
            <person name="Wong G.K.M."/>
            <person name="Huang Y."/>
            <person name="Loman N.J."/>
            <person name="Snyder L.A.S."/>
            <person name="Cai J.J."/>
            <person name="Huang J.-D."/>
            <person name="Mak W."/>
            <person name="Pallen M.J."/>
            <person name="Lok S."/>
            <person name="Yuen K.-Y."/>
        </authorList>
    </citation>
    <scope>NUCLEOTIDE SEQUENCE [LARGE SCALE GENOMIC DNA]</scope>
    <source>
        <strain>HLHK9</strain>
    </source>
</reference>
<organism>
    <name type="scientific">Laribacter hongkongensis (strain HLHK9)</name>
    <dbReference type="NCBI Taxonomy" id="557598"/>
    <lineage>
        <taxon>Bacteria</taxon>
        <taxon>Pseudomonadati</taxon>
        <taxon>Pseudomonadota</taxon>
        <taxon>Betaproteobacteria</taxon>
        <taxon>Neisseriales</taxon>
        <taxon>Aquaspirillaceae</taxon>
        <taxon>Laribacter</taxon>
    </lineage>
</organism>
<name>NDK_LARHH</name>
<accession>C1DD40</accession>